<organism>
    <name type="scientific">Methylobacterium sp. (strain 4-46)</name>
    <dbReference type="NCBI Taxonomy" id="426117"/>
    <lineage>
        <taxon>Bacteria</taxon>
        <taxon>Pseudomonadati</taxon>
        <taxon>Pseudomonadota</taxon>
        <taxon>Alphaproteobacteria</taxon>
        <taxon>Hyphomicrobiales</taxon>
        <taxon>Methylobacteriaceae</taxon>
        <taxon>Methylobacterium</taxon>
    </lineage>
</organism>
<sequence length="325" mass="34086">MSIRVGIVGISGFGGGEAMRLVASHPSFELIYAAGEGSAGSRLVDRFPGVPAKLADLVIEKWDPVTLPKLDLLFASLPTGASAEALARVPEDVRIVDIGGDHRYVEGWAYGLADVWPAEIEGRIRVANPGCFPAATLSALAPLLAERLIEPDNIVIDAKTGISGAGRGGADSKFGYAETNETVVPYGLLKHVHMPEIAKTIERLSGGSAAGLVFTPHLVPMTRGVLATMYCRGRASTGECLDAARRFYAGRAFVRVTDKPPQTKWATGSNLAFVSYAADPERNLVIAMGVVDNLGKGAAGQAVQNANLICGLPETAGLDGLPVWP</sequence>
<gene>
    <name evidence="1" type="primary">argC</name>
    <name type="ordered locus">M446_4524</name>
</gene>
<keyword id="KW-0028">Amino-acid biosynthesis</keyword>
<keyword id="KW-0055">Arginine biosynthesis</keyword>
<keyword id="KW-0963">Cytoplasm</keyword>
<keyword id="KW-0521">NADP</keyword>
<keyword id="KW-0560">Oxidoreductase</keyword>
<protein>
    <recommendedName>
        <fullName evidence="1">N-acetyl-gamma-glutamyl-phosphate reductase</fullName>
        <shortName evidence="1">AGPR</shortName>
        <ecNumber evidence="1">1.2.1.38</ecNumber>
    </recommendedName>
    <alternativeName>
        <fullName evidence="1">N-acetyl-glutamate semialdehyde dehydrogenase</fullName>
        <shortName evidence="1">NAGSA dehydrogenase</shortName>
    </alternativeName>
</protein>
<accession>B0UPC4</accession>
<comment type="function">
    <text evidence="1">Catalyzes the NADPH-dependent reduction of N-acetyl-5-glutamyl phosphate to yield N-acetyl-L-glutamate 5-semialdehyde.</text>
</comment>
<comment type="catalytic activity">
    <reaction evidence="1">
        <text>N-acetyl-L-glutamate 5-semialdehyde + phosphate + NADP(+) = N-acetyl-L-glutamyl 5-phosphate + NADPH + H(+)</text>
        <dbReference type="Rhea" id="RHEA:21588"/>
        <dbReference type="ChEBI" id="CHEBI:15378"/>
        <dbReference type="ChEBI" id="CHEBI:29123"/>
        <dbReference type="ChEBI" id="CHEBI:43474"/>
        <dbReference type="ChEBI" id="CHEBI:57783"/>
        <dbReference type="ChEBI" id="CHEBI:57936"/>
        <dbReference type="ChEBI" id="CHEBI:58349"/>
        <dbReference type="EC" id="1.2.1.38"/>
    </reaction>
</comment>
<comment type="pathway">
    <text evidence="1">Amino-acid biosynthesis; L-arginine biosynthesis; N(2)-acetyl-L-ornithine from L-glutamate: step 3/4.</text>
</comment>
<comment type="subcellular location">
    <subcellularLocation>
        <location evidence="1">Cytoplasm</location>
    </subcellularLocation>
</comment>
<comment type="similarity">
    <text evidence="1">Belongs to the NAGSA dehydrogenase family. Type 1 subfamily.</text>
</comment>
<evidence type="ECO:0000255" key="1">
    <source>
        <dbReference type="HAMAP-Rule" id="MF_00150"/>
    </source>
</evidence>
<name>ARGC_METS4</name>
<dbReference type="EC" id="1.2.1.38" evidence="1"/>
<dbReference type="EMBL" id="CP000943">
    <property type="protein sequence ID" value="ACA18865.1"/>
    <property type="molecule type" value="Genomic_DNA"/>
</dbReference>
<dbReference type="RefSeq" id="WP_012334254.1">
    <property type="nucleotide sequence ID" value="NC_010511.1"/>
</dbReference>
<dbReference type="SMR" id="B0UPC4"/>
<dbReference type="STRING" id="426117.M446_4524"/>
<dbReference type="KEGG" id="met:M446_4524"/>
<dbReference type="eggNOG" id="COG0002">
    <property type="taxonomic scope" value="Bacteria"/>
</dbReference>
<dbReference type="HOGENOM" id="CLU_006384_0_1_5"/>
<dbReference type="UniPathway" id="UPA00068">
    <property type="reaction ID" value="UER00108"/>
</dbReference>
<dbReference type="GO" id="GO:0005737">
    <property type="term" value="C:cytoplasm"/>
    <property type="evidence" value="ECO:0007669"/>
    <property type="project" value="UniProtKB-SubCell"/>
</dbReference>
<dbReference type="GO" id="GO:0003942">
    <property type="term" value="F:N-acetyl-gamma-glutamyl-phosphate reductase activity"/>
    <property type="evidence" value="ECO:0007669"/>
    <property type="project" value="UniProtKB-UniRule"/>
</dbReference>
<dbReference type="GO" id="GO:0051287">
    <property type="term" value="F:NAD binding"/>
    <property type="evidence" value="ECO:0007669"/>
    <property type="project" value="InterPro"/>
</dbReference>
<dbReference type="GO" id="GO:0070401">
    <property type="term" value="F:NADP+ binding"/>
    <property type="evidence" value="ECO:0007669"/>
    <property type="project" value="InterPro"/>
</dbReference>
<dbReference type="GO" id="GO:0006526">
    <property type="term" value="P:L-arginine biosynthetic process"/>
    <property type="evidence" value="ECO:0007669"/>
    <property type="project" value="UniProtKB-UniRule"/>
</dbReference>
<dbReference type="CDD" id="cd24148">
    <property type="entry name" value="AGPR_1_actinobacAGPR_like"/>
    <property type="match status" value="1"/>
</dbReference>
<dbReference type="CDD" id="cd23934">
    <property type="entry name" value="AGPR_1_C"/>
    <property type="match status" value="1"/>
</dbReference>
<dbReference type="Gene3D" id="3.30.360.10">
    <property type="entry name" value="Dihydrodipicolinate Reductase, domain 2"/>
    <property type="match status" value="1"/>
</dbReference>
<dbReference type="Gene3D" id="3.40.50.720">
    <property type="entry name" value="NAD(P)-binding Rossmann-like Domain"/>
    <property type="match status" value="1"/>
</dbReference>
<dbReference type="HAMAP" id="MF_00150">
    <property type="entry name" value="ArgC_type1"/>
    <property type="match status" value="1"/>
</dbReference>
<dbReference type="InterPro" id="IPR000706">
    <property type="entry name" value="AGPR_type-1"/>
</dbReference>
<dbReference type="InterPro" id="IPR036291">
    <property type="entry name" value="NAD(P)-bd_dom_sf"/>
</dbReference>
<dbReference type="InterPro" id="IPR050085">
    <property type="entry name" value="NAGSA_dehydrogenase"/>
</dbReference>
<dbReference type="InterPro" id="IPR000534">
    <property type="entry name" value="Semialdehyde_DH_NAD-bd"/>
</dbReference>
<dbReference type="NCBIfam" id="TIGR01850">
    <property type="entry name" value="argC"/>
    <property type="match status" value="1"/>
</dbReference>
<dbReference type="PANTHER" id="PTHR32338:SF10">
    <property type="entry name" value="N-ACETYL-GAMMA-GLUTAMYL-PHOSPHATE REDUCTASE, CHLOROPLASTIC-RELATED"/>
    <property type="match status" value="1"/>
</dbReference>
<dbReference type="PANTHER" id="PTHR32338">
    <property type="entry name" value="N-ACETYL-GAMMA-GLUTAMYL-PHOSPHATE REDUCTASE, CHLOROPLASTIC-RELATED-RELATED"/>
    <property type="match status" value="1"/>
</dbReference>
<dbReference type="Pfam" id="PF01118">
    <property type="entry name" value="Semialdhyde_dh"/>
    <property type="match status" value="1"/>
</dbReference>
<dbReference type="Pfam" id="PF22698">
    <property type="entry name" value="Semialdhyde_dhC_1"/>
    <property type="match status" value="1"/>
</dbReference>
<dbReference type="SMART" id="SM00859">
    <property type="entry name" value="Semialdhyde_dh"/>
    <property type="match status" value="1"/>
</dbReference>
<dbReference type="SUPFAM" id="SSF55347">
    <property type="entry name" value="Glyceraldehyde-3-phosphate dehydrogenase-like, C-terminal domain"/>
    <property type="match status" value="1"/>
</dbReference>
<dbReference type="SUPFAM" id="SSF51735">
    <property type="entry name" value="NAD(P)-binding Rossmann-fold domains"/>
    <property type="match status" value="1"/>
</dbReference>
<feature type="chain" id="PRO_1000096729" description="N-acetyl-gamma-glutamyl-phosphate reductase">
    <location>
        <begin position="1"/>
        <end position="325"/>
    </location>
</feature>
<feature type="active site" evidence="1">
    <location>
        <position position="131"/>
    </location>
</feature>
<proteinExistence type="inferred from homology"/>
<reference key="1">
    <citation type="submission" date="2008-02" db="EMBL/GenBank/DDBJ databases">
        <title>Complete sequence of chromosome of Methylobacterium sp. 4-46.</title>
        <authorList>
            <consortium name="US DOE Joint Genome Institute"/>
            <person name="Copeland A."/>
            <person name="Lucas S."/>
            <person name="Lapidus A."/>
            <person name="Glavina del Rio T."/>
            <person name="Dalin E."/>
            <person name="Tice H."/>
            <person name="Bruce D."/>
            <person name="Goodwin L."/>
            <person name="Pitluck S."/>
            <person name="Chertkov O."/>
            <person name="Brettin T."/>
            <person name="Detter J.C."/>
            <person name="Han C."/>
            <person name="Kuske C.R."/>
            <person name="Schmutz J."/>
            <person name="Larimer F."/>
            <person name="Land M."/>
            <person name="Hauser L."/>
            <person name="Kyrpides N."/>
            <person name="Ivanova N."/>
            <person name="Marx C.J."/>
            <person name="Richardson P."/>
        </authorList>
    </citation>
    <scope>NUCLEOTIDE SEQUENCE [LARGE SCALE GENOMIC DNA]</scope>
    <source>
        <strain>4-46</strain>
    </source>
</reference>